<accession>Q2LE08</accession>
<comment type="function">
    <text evidence="3">Transcriptional repressor.</text>
</comment>
<comment type="subcellular location">
    <subcellularLocation>
        <location evidence="3">Nucleus</location>
    </subcellularLocation>
</comment>
<comment type="tissue specificity">
    <text evidence="6">Shows complex and dynamic expression during early embryonic development. Prominent in many regions of the developing central nervous system, particularly in midbrain-hindbrain boundary, hindbrain and spinal cord. Strongly expressed in the retina, ear, branchial arches, hatching gland, heart, pronephric duct, gut, proctodeum, pectoral fin and swim bladder.</text>
</comment>
<comment type="developmental stage">
    <text evidence="6">Expressed both maternally and zygotically with continuous expression from the zygote to the early larva. Expression dramatically decreases at 30 and 50% epiboly stages, then increases from midgastrulation onwards, being maintained at a high level until the protruding-mouth stage.</text>
</comment>
<comment type="domain">
    <text evidence="2">The leucine-zipper is required for dimerization and transcriptional repression.</text>
</comment>
<reference key="1">
    <citation type="journal article" date="2007" name="Dev. Genes Evol.">
        <title>Molecular cloning, characterization, and developmental expression of foxp1 in zebrafish.</title>
        <authorList>
            <person name="Cheng L."/>
            <person name="Chong M."/>
            <person name="Fan W."/>
            <person name="Guo X."/>
            <person name="Zhang W."/>
            <person name="Yang X."/>
            <person name="Liu F."/>
            <person name="Gui Y."/>
            <person name="Lu D."/>
        </authorList>
    </citation>
    <scope>NUCLEOTIDE SEQUENCE [MRNA]</scope>
    <scope>TISSUE SPECIFICITY</scope>
    <scope>DEVELOPMENTAL STAGE</scope>
    <source>
        <tissue>Embryo</tissue>
    </source>
</reference>
<protein>
    <recommendedName>
        <fullName>Forkhead box protein P1-B</fullName>
    </recommendedName>
</protein>
<gene>
    <name type="primary">foxp1b</name>
    <name type="synonym">foxp1</name>
</gene>
<evidence type="ECO:0000250" key="1"/>
<evidence type="ECO:0000250" key="2">
    <source>
        <dbReference type="UniProtKB" id="P58462"/>
    </source>
</evidence>
<evidence type="ECO:0000250" key="3">
    <source>
        <dbReference type="UniProtKB" id="Q9H334"/>
    </source>
</evidence>
<evidence type="ECO:0000255" key="4">
    <source>
        <dbReference type="PROSITE-ProRule" id="PRU00089"/>
    </source>
</evidence>
<evidence type="ECO:0000256" key="5">
    <source>
        <dbReference type="SAM" id="MobiDB-lite"/>
    </source>
</evidence>
<evidence type="ECO:0000269" key="6">
    <source>
    </source>
</evidence>
<name>FXP1B_DANRE</name>
<organism>
    <name type="scientific">Danio rerio</name>
    <name type="common">Zebrafish</name>
    <name type="synonym">Brachydanio rerio</name>
    <dbReference type="NCBI Taxonomy" id="7955"/>
    <lineage>
        <taxon>Eukaryota</taxon>
        <taxon>Metazoa</taxon>
        <taxon>Chordata</taxon>
        <taxon>Craniata</taxon>
        <taxon>Vertebrata</taxon>
        <taxon>Euteleostomi</taxon>
        <taxon>Actinopterygii</taxon>
        <taxon>Neopterygii</taxon>
        <taxon>Teleostei</taxon>
        <taxon>Ostariophysi</taxon>
        <taxon>Cypriniformes</taxon>
        <taxon>Danionidae</taxon>
        <taxon>Danioninae</taxon>
        <taxon>Danio</taxon>
    </lineage>
</organism>
<dbReference type="EMBL" id="DQ333303">
    <property type="protein sequence ID" value="ABC60256.1"/>
    <property type="molecule type" value="mRNA"/>
</dbReference>
<dbReference type="RefSeq" id="NP_001034726.1">
    <property type="nucleotide sequence ID" value="NM_001039637.1"/>
</dbReference>
<dbReference type="SMR" id="Q2LE08"/>
<dbReference type="FunCoup" id="Q2LE08">
    <property type="interactions" value="965"/>
</dbReference>
<dbReference type="STRING" id="7955.ENSDARP00000064937"/>
<dbReference type="PaxDb" id="7955-ENSDARP00000109350"/>
<dbReference type="GeneID" id="569047"/>
<dbReference type="KEGG" id="dre:569047"/>
<dbReference type="AGR" id="ZFIN:ZDB-GENE-041203-1"/>
<dbReference type="CTD" id="569047"/>
<dbReference type="ZFIN" id="ZDB-GENE-041203-1">
    <property type="gene designation" value="foxp1b"/>
</dbReference>
<dbReference type="eggNOG" id="KOG4385">
    <property type="taxonomic scope" value="Eukaryota"/>
</dbReference>
<dbReference type="InParanoid" id="Q2LE08"/>
<dbReference type="OrthoDB" id="5830876at2759"/>
<dbReference type="PhylomeDB" id="Q2LE08"/>
<dbReference type="PRO" id="PR:Q2LE08"/>
<dbReference type="Proteomes" id="UP000000437">
    <property type="component" value="Chromosome 6"/>
</dbReference>
<dbReference type="GO" id="GO:0005634">
    <property type="term" value="C:nucleus"/>
    <property type="evidence" value="ECO:0000318"/>
    <property type="project" value="GO_Central"/>
</dbReference>
<dbReference type="GO" id="GO:0001227">
    <property type="term" value="F:DNA-binding transcription repressor activity, RNA polymerase II-specific"/>
    <property type="evidence" value="ECO:0000318"/>
    <property type="project" value="GO_Central"/>
</dbReference>
<dbReference type="GO" id="GO:0000978">
    <property type="term" value="F:RNA polymerase II cis-regulatory region sequence-specific DNA binding"/>
    <property type="evidence" value="ECO:0000318"/>
    <property type="project" value="GO_Central"/>
</dbReference>
<dbReference type="GO" id="GO:0008270">
    <property type="term" value="F:zinc ion binding"/>
    <property type="evidence" value="ECO:0007669"/>
    <property type="project" value="UniProtKB-KW"/>
</dbReference>
<dbReference type="GO" id="GO:0006357">
    <property type="term" value="P:regulation of transcription by RNA polymerase II"/>
    <property type="evidence" value="ECO:0000318"/>
    <property type="project" value="GO_Central"/>
</dbReference>
<dbReference type="CDD" id="cd20065">
    <property type="entry name" value="FH_FOXP2"/>
    <property type="match status" value="1"/>
</dbReference>
<dbReference type="FunFam" id="1.20.5.340:FF:000005">
    <property type="entry name" value="Forkhead box P1, isoform CRA_f"/>
    <property type="match status" value="1"/>
</dbReference>
<dbReference type="FunFam" id="1.10.10.10:FF:000010">
    <property type="entry name" value="Forkhead box P2 isoform B"/>
    <property type="match status" value="1"/>
</dbReference>
<dbReference type="Gene3D" id="1.20.5.340">
    <property type="match status" value="1"/>
</dbReference>
<dbReference type="Gene3D" id="1.10.10.10">
    <property type="entry name" value="Winged helix-like DNA-binding domain superfamily/Winged helix DNA-binding domain"/>
    <property type="match status" value="1"/>
</dbReference>
<dbReference type="InterPro" id="IPR047412">
    <property type="entry name" value="FH_FOXP1_P2"/>
</dbReference>
<dbReference type="InterPro" id="IPR001766">
    <property type="entry name" value="Fork_head_dom"/>
</dbReference>
<dbReference type="InterPro" id="IPR050998">
    <property type="entry name" value="FOXP"/>
</dbReference>
<dbReference type="InterPro" id="IPR032354">
    <property type="entry name" value="FOXP-CC"/>
</dbReference>
<dbReference type="InterPro" id="IPR030456">
    <property type="entry name" value="TF_fork_head_CS_2"/>
</dbReference>
<dbReference type="InterPro" id="IPR036388">
    <property type="entry name" value="WH-like_DNA-bd_sf"/>
</dbReference>
<dbReference type="InterPro" id="IPR036390">
    <property type="entry name" value="WH_DNA-bd_sf"/>
</dbReference>
<dbReference type="PANTHER" id="PTHR45796">
    <property type="entry name" value="FORKHEAD BOX P, ISOFORM C"/>
    <property type="match status" value="1"/>
</dbReference>
<dbReference type="PANTHER" id="PTHR45796:SF3">
    <property type="entry name" value="FORKHEAD BOX PROTEIN P1"/>
    <property type="match status" value="1"/>
</dbReference>
<dbReference type="Pfam" id="PF00250">
    <property type="entry name" value="Forkhead"/>
    <property type="match status" value="1"/>
</dbReference>
<dbReference type="Pfam" id="PF16159">
    <property type="entry name" value="FOXP-CC"/>
    <property type="match status" value="1"/>
</dbReference>
<dbReference type="PRINTS" id="PR00053">
    <property type="entry name" value="FORKHEAD"/>
</dbReference>
<dbReference type="SMART" id="SM00339">
    <property type="entry name" value="FH"/>
    <property type="match status" value="1"/>
</dbReference>
<dbReference type="SUPFAM" id="SSF46785">
    <property type="entry name" value="Winged helix' DNA-binding domain"/>
    <property type="match status" value="1"/>
</dbReference>
<dbReference type="PROSITE" id="PS00658">
    <property type="entry name" value="FORK_HEAD_2"/>
    <property type="match status" value="1"/>
</dbReference>
<dbReference type="PROSITE" id="PS50039">
    <property type="entry name" value="FORK_HEAD_3"/>
    <property type="match status" value="1"/>
</dbReference>
<dbReference type="PROSITE" id="PS00028">
    <property type="entry name" value="ZINC_FINGER_C2H2_1"/>
    <property type="match status" value="1"/>
</dbReference>
<sequence>MMQESGTEAANGTAHQNGAPPSVEGHREVRSKSTTPSSDITASDIINFQQHQALQVARQILLQQQQQSSVHKSPKNNDKQPATQVPVSVAMMTPQVITPQQMQQILQHQVLSPQQLQLLLQQQQALMLQQQLQEFYKKQQEQLHLQLIQQQHGSKQQSKEVSAQQLAFQQQLLQVQQLQQQHLLSLQRQGLLSIQPNQTLPLHTLTQGMIPAELQQLWKEVTNSHVKEENSVTNNGHRGLDLSSPSPVPLKNHNQHGSTNGQYISHSLKREGSTLDDHSPHSHPLYGHGVCKWPGCEAVFEDFQSFLKHLNNEHALDDRSTAQCRVQMQVVQQLELQLAKDKERLQAMMTHLHVKSTEPKPTPQPLNLVSNVALSKTAPAASPPLSLPQTPTTPTAPLTPLSQTHSVITPTSLHSVGPIRRRYSDKYNMPISPDIVQNKEFYMNAEVRPPFTYASLIRQAILESPEKQLTLNEIYNWFTRMFAYFRRNAATWKNAVRHNLSLHKCFVRVENVKGAVWTVDELEFQKRRPQKISGSPALVKNIHTTLGYGPALSAAFQASMAENIPLYTTASIGSPTLNSLASVIREEMNGAMDHGNSNGSDSSPGRSPLPAMHHISVKEEPMDPEEHEGPLSLVTTANHSPDFDHHRDYEDDHGTEDML</sequence>
<keyword id="KW-0238">DNA-binding</keyword>
<keyword id="KW-0479">Metal-binding</keyword>
<keyword id="KW-0539">Nucleus</keyword>
<keyword id="KW-1185">Reference proteome</keyword>
<keyword id="KW-0678">Repressor</keyword>
<keyword id="KW-0804">Transcription</keyword>
<keyword id="KW-0805">Transcription regulation</keyword>
<keyword id="KW-0862">Zinc</keyword>
<keyword id="KW-0863">Zinc-finger</keyword>
<feature type="chain" id="PRO_0000294521" description="Forkhead box protein P1-B">
    <location>
        <begin position="1"/>
        <end position="659"/>
    </location>
</feature>
<feature type="zinc finger region" description="C2H2-type">
    <location>
        <begin position="289"/>
        <end position="314"/>
    </location>
</feature>
<feature type="DNA-binding region" description="Fork-head" evidence="4">
    <location>
        <begin position="448"/>
        <end position="538"/>
    </location>
</feature>
<feature type="region of interest" description="Disordered" evidence="5">
    <location>
        <begin position="1"/>
        <end position="41"/>
    </location>
</feature>
<feature type="region of interest" description="Disordered" evidence="5">
    <location>
        <begin position="229"/>
        <end position="263"/>
    </location>
</feature>
<feature type="region of interest" description="Leucine-zipper">
    <location>
        <begin position="331"/>
        <end position="352"/>
    </location>
</feature>
<feature type="region of interest" description="CTBP1-binding" evidence="1">
    <location>
        <begin position="365"/>
        <end position="369"/>
    </location>
</feature>
<feature type="region of interest" description="Disordered" evidence="5">
    <location>
        <begin position="379"/>
        <end position="413"/>
    </location>
</feature>
<feature type="region of interest" description="Disordered" evidence="5">
    <location>
        <begin position="590"/>
        <end position="659"/>
    </location>
</feature>
<feature type="compositionally biased region" description="Polar residues" evidence="5">
    <location>
        <begin position="1"/>
        <end position="16"/>
    </location>
</feature>
<feature type="compositionally biased region" description="Polar residues" evidence="5">
    <location>
        <begin position="32"/>
        <end position="41"/>
    </location>
</feature>
<feature type="compositionally biased region" description="Low complexity" evidence="5">
    <location>
        <begin position="387"/>
        <end position="404"/>
    </location>
</feature>
<feature type="compositionally biased region" description="Polar residues" evidence="5">
    <location>
        <begin position="595"/>
        <end position="605"/>
    </location>
</feature>
<feature type="compositionally biased region" description="Basic and acidic residues" evidence="5">
    <location>
        <begin position="641"/>
        <end position="659"/>
    </location>
</feature>
<proteinExistence type="evidence at transcript level"/>